<dbReference type="EC" id="2.1.1.354" evidence="1"/>
<dbReference type="EMBL" id="CR382138">
    <property type="protein sequence ID" value="CAG89643.2"/>
    <property type="molecule type" value="Genomic_DNA"/>
</dbReference>
<dbReference type="RefSeq" id="XP_461254.2">
    <property type="nucleotide sequence ID" value="XM_461254.1"/>
</dbReference>
<dbReference type="SMR" id="Q6BKL7"/>
<dbReference type="FunCoup" id="Q6BKL7">
    <property type="interactions" value="142"/>
</dbReference>
<dbReference type="STRING" id="284592.Q6BKL7"/>
<dbReference type="GeneID" id="2903040"/>
<dbReference type="KEGG" id="dha:DEHA2F20834g"/>
<dbReference type="VEuPathDB" id="FungiDB:DEHA2F20834g"/>
<dbReference type="eggNOG" id="KOG1080">
    <property type="taxonomic scope" value="Eukaryota"/>
</dbReference>
<dbReference type="HOGENOM" id="CLU_004391_1_0_1"/>
<dbReference type="InParanoid" id="Q6BKL7"/>
<dbReference type="OMA" id="ERLPCLC"/>
<dbReference type="OrthoDB" id="308383at2759"/>
<dbReference type="Proteomes" id="UP000000599">
    <property type="component" value="Chromosome F"/>
</dbReference>
<dbReference type="GO" id="GO:0005694">
    <property type="term" value="C:chromosome"/>
    <property type="evidence" value="ECO:0007669"/>
    <property type="project" value="UniProtKB-SubCell"/>
</dbReference>
<dbReference type="GO" id="GO:0048188">
    <property type="term" value="C:Set1C/COMPASS complex"/>
    <property type="evidence" value="ECO:0000250"/>
    <property type="project" value="UniProtKB"/>
</dbReference>
<dbReference type="GO" id="GO:0140999">
    <property type="term" value="F:histone H3K4 trimethyltransferase activity"/>
    <property type="evidence" value="ECO:0007669"/>
    <property type="project" value="UniProtKB-EC"/>
</dbReference>
<dbReference type="GO" id="GO:0003723">
    <property type="term" value="F:RNA binding"/>
    <property type="evidence" value="ECO:0000250"/>
    <property type="project" value="UniProtKB"/>
</dbReference>
<dbReference type="GO" id="GO:0032259">
    <property type="term" value="P:methylation"/>
    <property type="evidence" value="ECO:0007669"/>
    <property type="project" value="UniProtKB-KW"/>
</dbReference>
<dbReference type="CDD" id="cd12302">
    <property type="entry name" value="RRM_scSet1p_like"/>
    <property type="match status" value="1"/>
</dbReference>
<dbReference type="Gene3D" id="3.30.70.330">
    <property type="match status" value="1"/>
</dbReference>
<dbReference type="Gene3D" id="2.170.270.10">
    <property type="entry name" value="SET domain"/>
    <property type="match status" value="1"/>
</dbReference>
<dbReference type="InterPro" id="IPR024657">
    <property type="entry name" value="COMPASS_Set1_N-SET"/>
</dbReference>
<dbReference type="InterPro" id="IPR012677">
    <property type="entry name" value="Nucleotide-bd_a/b_plait_sf"/>
</dbReference>
<dbReference type="InterPro" id="IPR003616">
    <property type="entry name" value="Post-SET_dom"/>
</dbReference>
<dbReference type="InterPro" id="IPR035979">
    <property type="entry name" value="RBD_domain_sf"/>
</dbReference>
<dbReference type="InterPro" id="IPR044570">
    <property type="entry name" value="Set1-like"/>
</dbReference>
<dbReference type="InterPro" id="IPR017111">
    <property type="entry name" value="Set1_fungi"/>
</dbReference>
<dbReference type="InterPro" id="IPR048669">
    <property type="entry name" value="SET1_RBD"/>
</dbReference>
<dbReference type="InterPro" id="IPR024636">
    <property type="entry name" value="SET_assoc"/>
</dbReference>
<dbReference type="InterPro" id="IPR001214">
    <property type="entry name" value="SET_dom"/>
</dbReference>
<dbReference type="InterPro" id="IPR046341">
    <property type="entry name" value="SET_dom_sf"/>
</dbReference>
<dbReference type="PANTHER" id="PTHR45814">
    <property type="entry name" value="HISTONE-LYSINE N-METHYLTRANSFERASE SETD1"/>
    <property type="match status" value="1"/>
</dbReference>
<dbReference type="PANTHER" id="PTHR45814:SF2">
    <property type="entry name" value="HISTONE-LYSINE N-METHYLTRANSFERASE SETD1"/>
    <property type="match status" value="1"/>
</dbReference>
<dbReference type="Pfam" id="PF11764">
    <property type="entry name" value="N-SET"/>
    <property type="match status" value="1"/>
</dbReference>
<dbReference type="Pfam" id="PF00856">
    <property type="entry name" value="SET"/>
    <property type="match status" value="1"/>
</dbReference>
<dbReference type="Pfam" id="PF21569">
    <property type="entry name" value="SET1_RBD"/>
    <property type="match status" value="1"/>
</dbReference>
<dbReference type="Pfam" id="PF11767">
    <property type="entry name" value="SET_assoc"/>
    <property type="match status" value="1"/>
</dbReference>
<dbReference type="PIRSF" id="PIRSF037104">
    <property type="entry name" value="Histone_H3-K4_mtfrase_Set1_fun"/>
    <property type="match status" value="1"/>
</dbReference>
<dbReference type="SMART" id="SM01291">
    <property type="entry name" value="N-SET"/>
    <property type="match status" value="1"/>
</dbReference>
<dbReference type="SMART" id="SM00508">
    <property type="entry name" value="PostSET"/>
    <property type="match status" value="1"/>
</dbReference>
<dbReference type="SMART" id="SM00317">
    <property type="entry name" value="SET"/>
    <property type="match status" value="1"/>
</dbReference>
<dbReference type="SUPFAM" id="SSF54928">
    <property type="entry name" value="RNA-binding domain, RBD"/>
    <property type="match status" value="1"/>
</dbReference>
<dbReference type="SUPFAM" id="SSF82199">
    <property type="entry name" value="SET domain"/>
    <property type="match status" value="1"/>
</dbReference>
<dbReference type="PROSITE" id="PS50868">
    <property type="entry name" value="POST_SET"/>
    <property type="match status" value="1"/>
</dbReference>
<dbReference type="PROSITE" id="PS51572">
    <property type="entry name" value="SAM_MT43_1"/>
    <property type="match status" value="1"/>
</dbReference>
<dbReference type="PROSITE" id="PS50280">
    <property type="entry name" value="SET"/>
    <property type="match status" value="1"/>
</dbReference>
<feature type="chain" id="PRO_0000269772" description="Histone-lysine N-methyltransferase, H3 lysine-4 specific">
    <location>
        <begin position="1"/>
        <end position="1088"/>
    </location>
</feature>
<feature type="domain" description="SET" evidence="3">
    <location>
        <begin position="946"/>
        <end position="1063"/>
    </location>
</feature>
<feature type="domain" description="Post-SET" evidence="2">
    <location>
        <begin position="1072"/>
        <end position="1088"/>
    </location>
</feature>
<feature type="region of interest" description="Disordered" evidence="4">
    <location>
        <begin position="1"/>
        <end position="136"/>
    </location>
</feature>
<feature type="region of interest" description="Disordered" evidence="4">
    <location>
        <begin position="179"/>
        <end position="217"/>
    </location>
</feature>
<feature type="region of interest" description="Disordered" evidence="4">
    <location>
        <begin position="365"/>
        <end position="406"/>
    </location>
</feature>
<feature type="region of interest" description="Disordered" evidence="4">
    <location>
        <begin position="510"/>
        <end position="531"/>
    </location>
</feature>
<feature type="region of interest" description="Disordered" evidence="4">
    <location>
        <begin position="624"/>
        <end position="747"/>
    </location>
</feature>
<feature type="short sequence motif" description="RxxxRR motif" evidence="1">
    <location>
        <begin position="912"/>
        <end position="917"/>
    </location>
</feature>
<feature type="compositionally biased region" description="Low complexity" evidence="4">
    <location>
        <begin position="1"/>
        <end position="10"/>
    </location>
</feature>
<feature type="compositionally biased region" description="Low complexity" evidence="4">
    <location>
        <begin position="27"/>
        <end position="38"/>
    </location>
</feature>
<feature type="compositionally biased region" description="Low complexity" evidence="4">
    <location>
        <begin position="69"/>
        <end position="87"/>
    </location>
</feature>
<feature type="compositionally biased region" description="Polar residues" evidence="4">
    <location>
        <begin position="101"/>
        <end position="136"/>
    </location>
</feature>
<feature type="compositionally biased region" description="Basic and acidic residues" evidence="4">
    <location>
        <begin position="365"/>
        <end position="391"/>
    </location>
</feature>
<feature type="compositionally biased region" description="Polar residues" evidence="4">
    <location>
        <begin position="392"/>
        <end position="406"/>
    </location>
</feature>
<feature type="compositionally biased region" description="Low complexity" evidence="4">
    <location>
        <begin position="510"/>
        <end position="529"/>
    </location>
</feature>
<feature type="compositionally biased region" description="Basic residues" evidence="4">
    <location>
        <begin position="705"/>
        <end position="715"/>
    </location>
</feature>
<feature type="binding site" evidence="3">
    <location>
        <position position="1062"/>
    </location>
    <ligand>
        <name>S-adenosyl-L-methionine</name>
        <dbReference type="ChEBI" id="CHEBI:59789"/>
    </ligand>
</feature>
<proteinExistence type="inferred from homology"/>
<gene>
    <name type="primary">SET1</name>
    <name type="ordered locus">DEHA2F20834g</name>
</gene>
<accession>Q6BKL7</accession>
<comment type="function">
    <text evidence="1">Catalytic component of the COMPASS (Set1C) complex that specifically mono-, di- and trimethylates histone H3 to form H3K4me1/2/3. Binds RNAs which might negatively affect its histone methyltransferase activity. COMPASS recognizes ubiquitinated H2B on one face of the nucleosome which stimulates the methylation of H3 on the opposing face.</text>
</comment>
<comment type="catalytic activity">
    <reaction evidence="1">
        <text>L-lysyl(4)-[histone H3] + 3 S-adenosyl-L-methionine = N(6),N(6),N(6)-trimethyl-L-lysyl(4)-[histone H3] + 3 S-adenosyl-L-homocysteine + 3 H(+)</text>
        <dbReference type="Rhea" id="RHEA:60260"/>
        <dbReference type="Rhea" id="RHEA-COMP:15537"/>
        <dbReference type="Rhea" id="RHEA-COMP:15547"/>
        <dbReference type="ChEBI" id="CHEBI:15378"/>
        <dbReference type="ChEBI" id="CHEBI:29969"/>
        <dbReference type="ChEBI" id="CHEBI:57856"/>
        <dbReference type="ChEBI" id="CHEBI:59789"/>
        <dbReference type="ChEBI" id="CHEBI:61961"/>
        <dbReference type="EC" id="2.1.1.354"/>
    </reaction>
</comment>
<comment type="catalytic activity">
    <reaction evidence="1">
        <text>N(6)-methyl-L-lysyl(4)-[histone H3] + S-adenosyl-L-methionine = N(6),N(6)-dimethyl-L-lysyl(4)-[histone H3] + S-adenosyl-L-homocysteine + H(+)</text>
        <dbReference type="Rhea" id="RHEA:60268"/>
        <dbReference type="Rhea" id="RHEA-COMP:15540"/>
        <dbReference type="Rhea" id="RHEA-COMP:15543"/>
        <dbReference type="ChEBI" id="CHEBI:15378"/>
        <dbReference type="ChEBI" id="CHEBI:57856"/>
        <dbReference type="ChEBI" id="CHEBI:59789"/>
        <dbReference type="ChEBI" id="CHEBI:61929"/>
        <dbReference type="ChEBI" id="CHEBI:61976"/>
    </reaction>
</comment>
<comment type="catalytic activity">
    <reaction evidence="1">
        <text>N(6),N(6)-dimethyl-L-lysyl(4)-[histone H3] + S-adenosyl-L-methionine = N(6),N(6),N(6)-trimethyl-L-lysyl(4)-[histone H3] + S-adenosyl-L-homocysteine + H(+)</text>
        <dbReference type="Rhea" id="RHEA:60272"/>
        <dbReference type="Rhea" id="RHEA-COMP:15537"/>
        <dbReference type="Rhea" id="RHEA-COMP:15540"/>
        <dbReference type="ChEBI" id="CHEBI:15378"/>
        <dbReference type="ChEBI" id="CHEBI:57856"/>
        <dbReference type="ChEBI" id="CHEBI:59789"/>
        <dbReference type="ChEBI" id="CHEBI:61961"/>
        <dbReference type="ChEBI" id="CHEBI:61976"/>
    </reaction>
</comment>
<comment type="subunit">
    <text evidence="1">Component of the Set1C/COMPASS complex.</text>
</comment>
<comment type="subcellular location">
    <subcellularLocation>
        <location evidence="5">Nucleus</location>
    </subcellularLocation>
    <subcellularLocation>
        <location evidence="5">Chromosome</location>
    </subcellularLocation>
</comment>
<comment type="domain">
    <text evidence="1">The RxxxRR motif forms an adapter helix that bridges the nucleosome and ubiquitin.</text>
</comment>
<comment type="similarity">
    <text evidence="3">Belongs to the class V-like SAM-binding methyltransferase superfamily.</text>
</comment>
<reference key="1">
    <citation type="journal article" date="2004" name="Nature">
        <title>Genome evolution in yeasts.</title>
        <authorList>
            <person name="Dujon B."/>
            <person name="Sherman D."/>
            <person name="Fischer G."/>
            <person name="Durrens P."/>
            <person name="Casaregola S."/>
            <person name="Lafontaine I."/>
            <person name="de Montigny J."/>
            <person name="Marck C."/>
            <person name="Neuveglise C."/>
            <person name="Talla E."/>
            <person name="Goffard N."/>
            <person name="Frangeul L."/>
            <person name="Aigle M."/>
            <person name="Anthouard V."/>
            <person name="Babour A."/>
            <person name="Barbe V."/>
            <person name="Barnay S."/>
            <person name="Blanchin S."/>
            <person name="Beckerich J.-M."/>
            <person name="Beyne E."/>
            <person name="Bleykasten C."/>
            <person name="Boisrame A."/>
            <person name="Boyer J."/>
            <person name="Cattolico L."/>
            <person name="Confanioleri F."/>
            <person name="de Daruvar A."/>
            <person name="Despons L."/>
            <person name="Fabre E."/>
            <person name="Fairhead C."/>
            <person name="Ferry-Dumazet H."/>
            <person name="Groppi A."/>
            <person name="Hantraye F."/>
            <person name="Hennequin C."/>
            <person name="Jauniaux N."/>
            <person name="Joyet P."/>
            <person name="Kachouri R."/>
            <person name="Kerrest A."/>
            <person name="Koszul R."/>
            <person name="Lemaire M."/>
            <person name="Lesur I."/>
            <person name="Ma L."/>
            <person name="Muller H."/>
            <person name="Nicaud J.-M."/>
            <person name="Nikolski M."/>
            <person name="Oztas S."/>
            <person name="Ozier-Kalogeropoulos O."/>
            <person name="Pellenz S."/>
            <person name="Potier S."/>
            <person name="Richard G.-F."/>
            <person name="Straub M.-L."/>
            <person name="Suleau A."/>
            <person name="Swennen D."/>
            <person name="Tekaia F."/>
            <person name="Wesolowski-Louvel M."/>
            <person name="Westhof E."/>
            <person name="Wirth B."/>
            <person name="Zeniou-Meyer M."/>
            <person name="Zivanovic Y."/>
            <person name="Bolotin-Fukuhara M."/>
            <person name="Thierry A."/>
            <person name="Bouchier C."/>
            <person name="Caudron B."/>
            <person name="Scarpelli C."/>
            <person name="Gaillardin C."/>
            <person name="Weissenbach J."/>
            <person name="Wincker P."/>
            <person name="Souciet J.-L."/>
        </authorList>
    </citation>
    <scope>NUCLEOTIDE SEQUENCE [LARGE SCALE GENOMIC DNA]</scope>
    <source>
        <strain>ATCC 36239 / CBS 767 / BCRC 21394 / JCM 1990 / NBRC 0083 / IGC 2968</strain>
    </source>
</reference>
<organism>
    <name type="scientific">Debaryomyces hansenii (strain ATCC 36239 / CBS 767 / BCRC 21394 / JCM 1990 / NBRC 0083 / IGC 2968)</name>
    <name type="common">Yeast</name>
    <name type="synonym">Torulaspora hansenii</name>
    <dbReference type="NCBI Taxonomy" id="284592"/>
    <lineage>
        <taxon>Eukaryota</taxon>
        <taxon>Fungi</taxon>
        <taxon>Dikarya</taxon>
        <taxon>Ascomycota</taxon>
        <taxon>Saccharomycotina</taxon>
        <taxon>Pichiomycetes</taxon>
        <taxon>Debaryomycetaceae</taxon>
        <taxon>Debaryomyces</taxon>
    </lineage>
</organism>
<keyword id="KW-0156">Chromatin regulator</keyword>
<keyword id="KW-0158">Chromosome</keyword>
<keyword id="KW-0489">Methyltransferase</keyword>
<keyword id="KW-0539">Nucleus</keyword>
<keyword id="KW-1185">Reference proteome</keyword>
<keyword id="KW-0949">S-adenosyl-L-methionine</keyword>
<keyword id="KW-0808">Transferase</keyword>
<sequence>MSYNPYRSRNYGGGYSNNGYRQRHYYSDYNESSYNSSYRDQYDRNGSYSGSKGRHYNSGTSRNAPPPSSSAYSSDSSSRTYANSSSSGPAKIPVGPKSLTIDGSTNGDLPTAGTQKHNIPPTNAISGTDATTGVNPNDSNFTQLLLHQDLSKQIEFSGEIDSKRNYKVIYDPELDKSLSKAERKTKQKKIRFNGESLSSHDVTDPRKSSTGSTSAYFLKPNKKSKKFPFKQLPQPKFIYDKDSLGPPPQNEIVVWDLPSTTSEVYLSNFFKSYGDSIKDLKFINDPLNAVPLGIATCKFQGNPDKSMRIAKKFIANVRINHTKIDGAELKIALNDNDNKLLDDKIKVAQDKLRISRIKIEEEEKKRLKKQQAIEDQKRRETEKAAKEKKLQESANSSHESRFKPNTTTLSIRHHNEVIPGVFLPRELRKYIRDRPYIFINDKYVPTRKVSSQDIKKVLNKYDWTRVLPDRSGFFVVFNSIKECERCFINEDGRKFFEYKMFMELALPENFNESSSSTSNNDNTDLSASNRKQNDVVEEASNMLIKEFQNFLAKDIRERVIAPVVLDLLSHDKYPKLVEELKAKELATKKAASPIVTNAVRQVKSKPNVLSSLAIKSKPQAILPSFRKKKDLPNAGLNSANKAKKNVIPMQHALNYDHESDESDEDDSTRSTTPLTPTLKRERSPTVSSVSNDNDIEDKLEDIQKPSKKKQKKTKLHQSFLYDSASDEDMEAVSEEKEVEKDESEGEEDIDYSHIDKIYQPTEDYPRPVYEEVPRFPSDPLDLDALQSIIKDDEDITLLQTALADVTSESNIKNMEYWAWKQKDIKAKAGVQEISEDLEVIGPLDSRFDSKSGAFKSEGYRKIPDADKIEYLPHRRKIHKPIKTIQHDDDELNANNSTTNNNSNNIQSSRVNRANNRRFAADISAQKQMLGSETDILNLNALTKRKKPVSFARSAIHNWGLYALEPIAAKEMIIEYVGESIRQQVAEHRERSYLKTGIGSSYLFRIDENTVVDATKKGGIARFINHCCNPSCTAKIIKVEGKKRIVIYALRDIEANEELTYDYKFEKETNDAERIRCLCGAPGCKGYLN</sequence>
<protein>
    <recommendedName>
        <fullName>Histone-lysine N-methyltransferase, H3 lysine-4 specific</fullName>
        <ecNumber evidence="1">2.1.1.354</ecNumber>
    </recommendedName>
    <alternativeName>
        <fullName>COMPASS component SET1</fullName>
    </alternativeName>
    <alternativeName>
        <fullName>SET domain-containing protein 1</fullName>
    </alternativeName>
</protein>
<name>SET1_DEBHA</name>
<evidence type="ECO:0000250" key="1">
    <source>
        <dbReference type="UniProtKB" id="P38827"/>
    </source>
</evidence>
<evidence type="ECO:0000255" key="2">
    <source>
        <dbReference type="PROSITE-ProRule" id="PRU00155"/>
    </source>
</evidence>
<evidence type="ECO:0000255" key="3">
    <source>
        <dbReference type="PROSITE-ProRule" id="PRU00190"/>
    </source>
</evidence>
<evidence type="ECO:0000256" key="4">
    <source>
        <dbReference type="SAM" id="MobiDB-lite"/>
    </source>
</evidence>
<evidence type="ECO:0000305" key="5"/>